<evidence type="ECO:0000250" key="1">
    <source>
        <dbReference type="UniProtKB" id="Q8CHK3"/>
    </source>
</evidence>
<evidence type="ECO:0000250" key="2">
    <source>
        <dbReference type="UniProtKB" id="Q96N66"/>
    </source>
</evidence>
<evidence type="ECO:0000255" key="3"/>
<evidence type="ECO:0000256" key="4">
    <source>
        <dbReference type="SAM" id="MobiDB-lite"/>
    </source>
</evidence>
<evidence type="ECO:0000305" key="5"/>
<comment type="function">
    <text evidence="1">Acyltransferase which catalyzes the transfer of an acyl group from an acyl-CoA to a lysophosphatidylinositol (1-acylglycerophosphatidylinositol or LPI) leading to the production of a phosphatidylinositol (1,2-diacyl-sn-glycero-3-phosphoinositol or PI) and participates in the reacylation step of the phospholipid remodeling pathway also known as the Lands cycle. Prefers arachidonoyl-CoA as the acyl donor, thus contributing to the regulation of free levels arachidonic acid in cell. In liver, participates in the regulation of triglyceride metabolism through the phosphatidylinositol acyl-chain remodeling regulation.</text>
</comment>
<comment type="catalytic activity">
    <reaction evidence="1">
        <text>a 1-acyl-sn-glycero-3-phospho-(1D-myo-inositol) + an acyl-CoA = a 1,2-diacyl-sn-glycero-3-phospho-(1D-myo-inositol) + CoA</text>
        <dbReference type="Rhea" id="RHEA:33195"/>
        <dbReference type="ChEBI" id="CHEBI:57287"/>
        <dbReference type="ChEBI" id="CHEBI:57880"/>
        <dbReference type="ChEBI" id="CHEBI:58342"/>
        <dbReference type="ChEBI" id="CHEBI:64771"/>
    </reaction>
    <physiologicalReaction direction="left-to-right" evidence="1">
        <dbReference type="Rhea" id="RHEA:33196"/>
    </physiologicalReaction>
</comment>
<comment type="catalytic activity">
    <reaction evidence="2">
        <text>a 1-acyl-sn-glycero-3-phospho-(1D-myo-inositol) + (5Z,8Z,11Z,14Z)-eicosatetraenoyl-CoA = a 1-acyl-2-(5Z,8Z,11Z,14Z-eicosatetraenoyl)-sn-glycero-3-phospho-(1D-myo-inositol) + CoA</text>
        <dbReference type="Rhea" id="RHEA:37015"/>
        <dbReference type="ChEBI" id="CHEBI:57287"/>
        <dbReference type="ChEBI" id="CHEBI:57368"/>
        <dbReference type="ChEBI" id="CHEBI:64771"/>
        <dbReference type="ChEBI" id="CHEBI:75243"/>
    </reaction>
    <physiologicalReaction direction="left-to-right" evidence="2">
        <dbReference type="Rhea" id="RHEA:37016"/>
    </physiologicalReaction>
</comment>
<comment type="catalytic activity">
    <reaction evidence="2">
        <text>(5Z,8Z,11Z,14Z)-eicosatetraenoyl-CoA + 1-hexadecanoyl-sn-glycero-3-phosphocholine = 1-hexadecanoyl-2-(5Z,8Z,11Z,14Z-eicosatetraenoyl)-sn-glycero-3-phosphocholine + CoA</text>
        <dbReference type="Rhea" id="RHEA:35999"/>
        <dbReference type="ChEBI" id="CHEBI:57287"/>
        <dbReference type="ChEBI" id="CHEBI:57368"/>
        <dbReference type="ChEBI" id="CHEBI:72998"/>
        <dbReference type="ChEBI" id="CHEBI:73003"/>
    </reaction>
    <physiologicalReaction direction="left-to-right" evidence="2">
        <dbReference type="Rhea" id="RHEA:36000"/>
    </physiologicalReaction>
</comment>
<comment type="catalytic activity">
    <reaction evidence="1">
        <text>1-octadecanoyl-sn-glycero-3-phospho-(1D-myo-inositol) + (5Z,8Z,11Z,14Z)-eicosatetraenoyl-CoA = 1-octadecanoyl-2-(5Z,8Z,11Z,14Z-eicosatetraenoyl)-sn-glycero-3-phospho-(1D-myo-inositol) + CoA</text>
        <dbReference type="Rhea" id="RHEA:36835"/>
        <dbReference type="ChEBI" id="CHEBI:57287"/>
        <dbReference type="ChEBI" id="CHEBI:57368"/>
        <dbReference type="ChEBI" id="CHEBI:74243"/>
        <dbReference type="ChEBI" id="CHEBI:133606"/>
    </reaction>
    <physiologicalReaction direction="left-to-right" evidence="1">
        <dbReference type="Rhea" id="RHEA:36836"/>
    </physiologicalReaction>
</comment>
<comment type="pathway">
    <text evidence="2">Lipid metabolism; phospholipid metabolism.</text>
</comment>
<comment type="subunit">
    <text evidence="2">Interacts with SPTSSA; the interaction facilitates MBOAT7 location to mitochondria-associated membranes (MAMs).</text>
</comment>
<comment type="subcellular location">
    <subcellularLocation>
        <location evidence="2">Endoplasmic reticulum membrane</location>
        <topology evidence="2">Multi-pass membrane protein</topology>
    </subcellularLocation>
    <text evidence="2">Localized in specific membrane structures termed mitochondria-associated membranes (MAMs) which connect the endoplasmic reticulum (ER) and the mitochondria.</text>
</comment>
<comment type="similarity">
    <text evidence="5">Belongs to the membrane-bound acyltransferase family.</text>
</comment>
<accession>Q0VCY6</accession>
<organism>
    <name type="scientific">Bos taurus</name>
    <name type="common">Bovine</name>
    <dbReference type="NCBI Taxonomy" id="9913"/>
    <lineage>
        <taxon>Eukaryota</taxon>
        <taxon>Metazoa</taxon>
        <taxon>Chordata</taxon>
        <taxon>Craniata</taxon>
        <taxon>Vertebrata</taxon>
        <taxon>Euteleostomi</taxon>
        <taxon>Mammalia</taxon>
        <taxon>Eutheria</taxon>
        <taxon>Laurasiatheria</taxon>
        <taxon>Artiodactyla</taxon>
        <taxon>Ruminantia</taxon>
        <taxon>Pecora</taxon>
        <taxon>Bovidae</taxon>
        <taxon>Bovinae</taxon>
        <taxon>Bos</taxon>
    </lineage>
</organism>
<keyword id="KW-0012">Acyltransferase</keyword>
<keyword id="KW-0256">Endoplasmic reticulum</keyword>
<keyword id="KW-0325">Glycoprotein</keyword>
<keyword id="KW-0444">Lipid biosynthesis</keyword>
<keyword id="KW-0443">Lipid metabolism</keyword>
<keyword id="KW-0472">Membrane</keyword>
<keyword id="KW-0594">Phospholipid biosynthesis</keyword>
<keyword id="KW-1208">Phospholipid metabolism</keyword>
<keyword id="KW-1185">Reference proteome</keyword>
<keyword id="KW-0808">Transferase</keyword>
<keyword id="KW-0812">Transmembrane</keyword>
<keyword id="KW-1133">Transmembrane helix</keyword>
<dbReference type="EC" id="2.3.1.-"/>
<dbReference type="EMBL" id="BC119932">
    <property type="protein sequence ID" value="AAI19933.1"/>
    <property type="molecule type" value="mRNA"/>
</dbReference>
<dbReference type="RefSeq" id="NP_001068620.1">
    <property type="nucleotide sequence ID" value="NM_001075152.1"/>
</dbReference>
<dbReference type="RefSeq" id="XP_005219813.1">
    <property type="nucleotide sequence ID" value="XM_005219756.5"/>
</dbReference>
<dbReference type="RefSeq" id="XP_010813839.1">
    <property type="nucleotide sequence ID" value="XM_010815537.2"/>
</dbReference>
<dbReference type="SMR" id="Q0VCY6"/>
<dbReference type="FunCoup" id="Q0VCY6">
    <property type="interactions" value="1743"/>
</dbReference>
<dbReference type="STRING" id="9913.ENSBTAP00000021152"/>
<dbReference type="GlyCosmos" id="Q0VCY6">
    <property type="glycosylation" value="1 site, No reported glycans"/>
</dbReference>
<dbReference type="GlyGen" id="Q0VCY6">
    <property type="glycosylation" value="1 site"/>
</dbReference>
<dbReference type="PaxDb" id="9913-ENSBTAP00000021152"/>
<dbReference type="Ensembl" id="ENSBTAT00000021152.4">
    <property type="protein sequence ID" value="ENSBTAP00000021152.3"/>
    <property type="gene ID" value="ENSBTAG00000015908.5"/>
</dbReference>
<dbReference type="GeneID" id="504236"/>
<dbReference type="KEGG" id="bta:504236"/>
<dbReference type="CTD" id="79143"/>
<dbReference type="VEuPathDB" id="HostDB:ENSBTAG00000015908"/>
<dbReference type="VGNC" id="VGNC:31289">
    <property type="gene designation" value="MBOAT7"/>
</dbReference>
<dbReference type="eggNOG" id="KOG2706">
    <property type="taxonomic scope" value="Eukaryota"/>
</dbReference>
<dbReference type="GeneTree" id="ENSGT01030000234564"/>
<dbReference type="HOGENOM" id="CLU_011340_1_1_1"/>
<dbReference type="InParanoid" id="Q0VCY6"/>
<dbReference type="OMA" id="TNMIQML"/>
<dbReference type="OrthoDB" id="7663182at2759"/>
<dbReference type="TreeFam" id="TF320024"/>
<dbReference type="Reactome" id="R-BTA-1482922">
    <property type="pathway name" value="Acyl chain remodelling of PI"/>
</dbReference>
<dbReference type="UniPathway" id="UPA00085"/>
<dbReference type="Proteomes" id="UP000009136">
    <property type="component" value="Chromosome 18"/>
</dbReference>
<dbReference type="Bgee" id="ENSBTAG00000015908">
    <property type="expression patterns" value="Expressed in Ammon's horn and 105 other cell types or tissues"/>
</dbReference>
<dbReference type="GO" id="GO:0005789">
    <property type="term" value="C:endoplasmic reticulum membrane"/>
    <property type="evidence" value="ECO:0007669"/>
    <property type="project" value="UniProtKB-SubCell"/>
</dbReference>
<dbReference type="GO" id="GO:0016020">
    <property type="term" value="C:membrane"/>
    <property type="evidence" value="ECO:0000318"/>
    <property type="project" value="GO_Central"/>
</dbReference>
<dbReference type="GO" id="GO:0044233">
    <property type="term" value="C:mitochondria-associated endoplasmic reticulum membrane contact site"/>
    <property type="evidence" value="ECO:0000250"/>
    <property type="project" value="UniProtKB"/>
</dbReference>
<dbReference type="GO" id="GO:0071617">
    <property type="term" value="F:lysophospholipid acyltransferase activity"/>
    <property type="evidence" value="ECO:0000250"/>
    <property type="project" value="UniProtKB"/>
</dbReference>
<dbReference type="GO" id="GO:0008374">
    <property type="term" value="F:O-acyltransferase activity"/>
    <property type="evidence" value="ECO:0000250"/>
    <property type="project" value="UniProtKB"/>
</dbReference>
<dbReference type="GO" id="GO:0021819">
    <property type="term" value="P:layer formation in cerebral cortex"/>
    <property type="evidence" value="ECO:0000250"/>
    <property type="project" value="UniProtKB"/>
</dbReference>
<dbReference type="GO" id="GO:0030258">
    <property type="term" value="P:lipid modification"/>
    <property type="evidence" value="ECO:0000318"/>
    <property type="project" value="GO_Central"/>
</dbReference>
<dbReference type="GO" id="GO:0036151">
    <property type="term" value="P:phosphatidylcholine acyl-chain remodeling"/>
    <property type="evidence" value="ECO:0000250"/>
    <property type="project" value="UniProtKB"/>
</dbReference>
<dbReference type="GO" id="GO:0036149">
    <property type="term" value="P:phosphatidylinositol acyl-chain remodeling"/>
    <property type="evidence" value="ECO:0000250"/>
    <property type="project" value="UniProtKB"/>
</dbReference>
<dbReference type="GO" id="GO:0006661">
    <property type="term" value="P:phosphatidylinositol biosynthetic process"/>
    <property type="evidence" value="ECO:0000250"/>
    <property type="project" value="UniProtKB"/>
</dbReference>
<dbReference type="GO" id="GO:0090207">
    <property type="term" value="P:regulation of triglyceride metabolic process"/>
    <property type="evidence" value="ECO:0000250"/>
    <property type="project" value="UniProtKB"/>
</dbReference>
<dbReference type="InterPro" id="IPR049941">
    <property type="entry name" value="LPLAT_7/PORCN-like"/>
</dbReference>
<dbReference type="InterPro" id="IPR004299">
    <property type="entry name" value="MBOAT_fam"/>
</dbReference>
<dbReference type="PANTHER" id="PTHR13906:SF16">
    <property type="entry name" value="LYSOPHOSPHOLIPID ACYLTRANSFERASE 7"/>
    <property type="match status" value="1"/>
</dbReference>
<dbReference type="PANTHER" id="PTHR13906">
    <property type="entry name" value="PORCUPINE"/>
    <property type="match status" value="1"/>
</dbReference>
<dbReference type="Pfam" id="PF03062">
    <property type="entry name" value="MBOAT"/>
    <property type="match status" value="1"/>
</dbReference>
<gene>
    <name type="primary">MBOAT7</name>
    <name type="synonym">LENG4</name>
    <name type="synonym">OACT7</name>
</gene>
<proteinExistence type="evidence at transcript level"/>
<feature type="chain" id="PRO_0000317456" description="Membrane-bound acylglycerophosphatidylinositol O-acyltransferase MBOAT7">
    <location>
        <begin position="1"/>
        <end position="472"/>
    </location>
</feature>
<feature type="topological domain" description="Cytoplasmic" evidence="2">
    <location>
        <begin position="1"/>
        <end position="5"/>
    </location>
</feature>
<feature type="transmembrane region" description="Helical" evidence="2">
    <location>
        <begin position="6"/>
        <end position="22"/>
    </location>
</feature>
<feature type="topological domain" description="Lumenal" evidence="2">
    <location>
        <begin position="23"/>
        <end position="33"/>
    </location>
</feature>
<feature type="transmembrane region" description="Helical" evidence="2">
    <location>
        <begin position="34"/>
        <end position="57"/>
    </location>
</feature>
<feature type="topological domain" description="Cytoplasmic" evidence="2">
    <location>
        <begin position="58"/>
        <end position="73"/>
    </location>
</feature>
<feature type="transmembrane region" description="Helical" evidence="2">
    <location>
        <begin position="74"/>
        <end position="93"/>
    </location>
</feature>
<feature type="topological domain" description="Lumenal" evidence="2">
    <location>
        <begin position="94"/>
        <end position="194"/>
    </location>
</feature>
<feature type="transmembrane region" description="Helical" evidence="2">
    <location>
        <begin position="195"/>
        <end position="212"/>
    </location>
</feature>
<feature type="topological domain" description="Cytoplasmic" evidence="2">
    <location>
        <begin position="213"/>
        <end position="231"/>
    </location>
</feature>
<feature type="transmembrane region" description="Helical" evidence="2">
    <location>
        <begin position="232"/>
        <end position="261"/>
    </location>
</feature>
<feature type="topological domain" description="Lumenal" evidence="2">
    <location>
        <begin position="262"/>
        <end position="426"/>
    </location>
</feature>
<feature type="transmembrane region" description="Helical" evidence="2">
    <location>
        <begin position="427"/>
        <end position="447"/>
    </location>
</feature>
<feature type="topological domain" description="Cytoplasmic" evidence="2">
    <location>
        <begin position="448"/>
        <end position="472"/>
    </location>
</feature>
<feature type="region of interest" description="Disordered" evidence="4">
    <location>
        <begin position="450"/>
        <end position="472"/>
    </location>
</feature>
<feature type="glycosylation site" description="N-linked (GlcNAc...) asparagine" evidence="3">
    <location>
        <position position="321"/>
    </location>
</feature>
<protein>
    <recommendedName>
        <fullName evidence="2">Membrane-bound acylglycerophosphatidylinositol O-acyltransferase MBOAT7</fullName>
        <ecNumber>2.3.1.-</ecNumber>
    </recommendedName>
    <alternativeName>
        <fullName>Leukocyte receptor cluster member 4</fullName>
    </alternativeName>
    <alternativeName>
        <fullName>Lysophospholipid acyltransferase 7</fullName>
        <shortName>LPLAT 7</shortName>
    </alternativeName>
    <alternativeName>
        <fullName>Membrane-bound O-acyltransferase domain-containing protein 7</fullName>
        <shortName>O-acyltransferase domain-containing protein 7</shortName>
    </alternativeName>
</protein>
<reference key="1">
    <citation type="submission" date="2006-08" db="EMBL/GenBank/DDBJ databases">
        <authorList>
            <consortium name="NIH - Mammalian Gene Collection (MGC) project"/>
        </authorList>
    </citation>
    <scope>NUCLEOTIDE SEQUENCE [LARGE SCALE MRNA]</scope>
    <source>
        <strain>Hereford</strain>
        <tissue>Fetal skin</tissue>
    </source>
</reference>
<name>MBOA7_BOVIN</name>
<sequence>MSPEEWTYLVVLLISIPIGFLFKKAGPGLKRWGAAAVGLGLTLFTCGPHTLHSLVTILGTWALIQAQPCSCHALALAWTFSYLLFFRALSLLGLPTPTPFTNAVQLLLTLKLVSLASEVQDLHVAQRKEMASGFSKGPPLGLLPDVPSLMETLSYSYCYVGIMTGPFFRYRTYLDWLEQPFPGAVPSLRPLLRRAWPAPLFGLLFLLSSHLFPLEAVREDAFYARPLPARLFYMIPVFFAFRMRFYVAWIAAECGCIAAGFGAYPVAAKARAGGGPTLQCPPPSSPEMAASLEYDYETIRNIDCYNTDFCVTVREGMRYWNMTVQWWLAQYIYKSAPARSYVLRSAWTMLLSAYWHGLHPGYYLSFLTIPLCLAAERQLESALRWRLGPGGQKAWDWVHWFLKMRAYDYMSMGFVLLSLRDTLRYWASVYFCVHVLALAALGLGLALGRGGPGRRKSGAPAPSPASGKLREE</sequence>